<dbReference type="EC" id="6.2.1.20" evidence="7 8"/>
<dbReference type="EC" id="6.2.1.47" evidence="7 8"/>
<dbReference type="EMBL" id="AL123456">
    <property type="protein sequence ID" value="CCP42824.1"/>
    <property type="molecule type" value="Genomic_DNA"/>
</dbReference>
<dbReference type="PIR" id="C70751">
    <property type="entry name" value="C70751"/>
</dbReference>
<dbReference type="RefSeq" id="NP_214613.1">
    <property type="nucleotide sequence ID" value="NC_000962.3"/>
</dbReference>
<dbReference type="RefSeq" id="WP_003400792.1">
    <property type="nucleotide sequence ID" value="NC_000962.3"/>
</dbReference>
<dbReference type="PDB" id="4IR7">
    <property type="method" value="X-ray"/>
    <property type="resolution" value="2.80 A"/>
    <property type="chains" value="A=1-540"/>
</dbReference>
<dbReference type="PDB" id="4ISB">
    <property type="method" value="X-ray"/>
    <property type="resolution" value="2.20 A"/>
    <property type="chains" value="A/B=1-540"/>
</dbReference>
<dbReference type="PDBsum" id="4IR7"/>
<dbReference type="PDBsum" id="4ISB"/>
<dbReference type="SMR" id="P9WQ55"/>
<dbReference type="STRING" id="83332.Rv0099"/>
<dbReference type="SwissLipids" id="SLP:000000979"/>
<dbReference type="PaxDb" id="83332-Rv0099"/>
<dbReference type="DNASU" id="886933"/>
<dbReference type="GeneID" id="886933"/>
<dbReference type="KEGG" id="mtu:Rv0099"/>
<dbReference type="KEGG" id="mtv:RVBD_0099"/>
<dbReference type="PATRIC" id="fig|83332.111.peg.113"/>
<dbReference type="TubercuList" id="Rv0099"/>
<dbReference type="eggNOG" id="COG0318">
    <property type="taxonomic scope" value="Bacteria"/>
</dbReference>
<dbReference type="InParanoid" id="P9WQ55"/>
<dbReference type="OrthoDB" id="4593279at2"/>
<dbReference type="PhylomeDB" id="P9WQ55"/>
<dbReference type="UniPathway" id="UPA00199"/>
<dbReference type="Proteomes" id="UP000001584">
    <property type="component" value="Chromosome"/>
</dbReference>
<dbReference type="GO" id="GO:0005737">
    <property type="term" value="C:cytoplasm"/>
    <property type="evidence" value="ECO:0007669"/>
    <property type="project" value="UniProtKB-SubCell"/>
</dbReference>
<dbReference type="GO" id="GO:0005886">
    <property type="term" value="C:plasma membrane"/>
    <property type="evidence" value="ECO:0007005"/>
    <property type="project" value="MTBBASE"/>
</dbReference>
<dbReference type="GO" id="GO:0005524">
    <property type="term" value="F:ATP binding"/>
    <property type="evidence" value="ECO:0007669"/>
    <property type="project" value="UniProtKB-KW"/>
</dbReference>
<dbReference type="GO" id="GO:0008922">
    <property type="term" value="F:long-chain fatty acid [acyl-carrier-protein] ligase activity"/>
    <property type="evidence" value="ECO:0007669"/>
    <property type="project" value="UniProtKB-EC"/>
</dbReference>
<dbReference type="GO" id="GO:0031956">
    <property type="term" value="F:medium-chain fatty acid-CoA ligase activity"/>
    <property type="evidence" value="ECO:0000318"/>
    <property type="project" value="GO_Central"/>
</dbReference>
<dbReference type="GO" id="GO:0046872">
    <property type="term" value="F:metal ion binding"/>
    <property type="evidence" value="ECO:0007669"/>
    <property type="project" value="UniProtKB-KW"/>
</dbReference>
<dbReference type="GO" id="GO:0006631">
    <property type="term" value="P:fatty acid metabolic process"/>
    <property type="evidence" value="ECO:0000318"/>
    <property type="project" value="GO_Central"/>
</dbReference>
<dbReference type="CDD" id="cd17635">
    <property type="entry name" value="FADD10"/>
    <property type="match status" value="1"/>
</dbReference>
<dbReference type="FunFam" id="3.40.50.12780:FF:000081">
    <property type="entry name" value="Possible fatty-acid-CoA ligase fadD10"/>
    <property type="match status" value="1"/>
</dbReference>
<dbReference type="Gene3D" id="3.30.300.30">
    <property type="match status" value="1"/>
</dbReference>
<dbReference type="Gene3D" id="3.40.50.12780">
    <property type="entry name" value="N-terminal domain of ligase-like"/>
    <property type="match status" value="1"/>
</dbReference>
<dbReference type="InterPro" id="IPR025110">
    <property type="entry name" value="AMP-bd_C"/>
</dbReference>
<dbReference type="InterPro" id="IPR045851">
    <property type="entry name" value="AMP-bd_C_sf"/>
</dbReference>
<dbReference type="InterPro" id="IPR020845">
    <property type="entry name" value="AMP-binding_CS"/>
</dbReference>
<dbReference type="InterPro" id="IPR000873">
    <property type="entry name" value="AMP-dep_synth/lig_dom"/>
</dbReference>
<dbReference type="InterPro" id="IPR042099">
    <property type="entry name" value="ANL_N_sf"/>
</dbReference>
<dbReference type="InterPro" id="IPR050237">
    <property type="entry name" value="ATP-dep_AMP-bd_enzyme"/>
</dbReference>
<dbReference type="NCBIfam" id="NF004515">
    <property type="entry name" value="PRK05857.1"/>
    <property type="match status" value="1"/>
</dbReference>
<dbReference type="PANTHER" id="PTHR43767">
    <property type="entry name" value="LONG-CHAIN-FATTY-ACID--COA LIGASE"/>
    <property type="match status" value="1"/>
</dbReference>
<dbReference type="PANTHER" id="PTHR43767:SF1">
    <property type="entry name" value="NONRIBOSOMAL PEPTIDE SYNTHASE PES1 (EUROFUNG)-RELATED"/>
    <property type="match status" value="1"/>
</dbReference>
<dbReference type="Pfam" id="PF00501">
    <property type="entry name" value="AMP-binding"/>
    <property type="match status" value="1"/>
</dbReference>
<dbReference type="Pfam" id="PF13193">
    <property type="entry name" value="AMP-binding_C"/>
    <property type="match status" value="1"/>
</dbReference>
<dbReference type="SUPFAM" id="SSF56801">
    <property type="entry name" value="Acetyl-CoA synthetase-like"/>
    <property type="match status" value="1"/>
</dbReference>
<dbReference type="PROSITE" id="PS00455">
    <property type="entry name" value="AMP_BINDING"/>
    <property type="match status" value="1"/>
</dbReference>
<organism>
    <name type="scientific">Mycobacterium tuberculosis (strain ATCC 25618 / H37Rv)</name>
    <dbReference type="NCBI Taxonomy" id="83332"/>
    <lineage>
        <taxon>Bacteria</taxon>
        <taxon>Bacillati</taxon>
        <taxon>Actinomycetota</taxon>
        <taxon>Actinomycetes</taxon>
        <taxon>Mycobacteriales</taxon>
        <taxon>Mycobacteriaceae</taxon>
        <taxon>Mycobacterium</taxon>
        <taxon>Mycobacterium tuberculosis complex</taxon>
    </lineage>
</organism>
<name>INLPC_MYCTU</name>
<comment type="function">
    <text evidence="1 7 8 9">Acyl:acyl-carrier protein ligase involved in the biosynthesis of a unique class of isonitrile lipopeptides (INLPs) that seem to function as virulence factors in M.tuberculosis and to play a role in metal acquisition (PubMed:28634299). Catalyzes the activation of medium/long-chain fatty acids as acyl-adenylates (acyl-AMP), which are then transferred to the phosphopantetheine arm of the acyl-carrier protein (ACP) Rv0100 (PubMed:22451903, PubMed:23625916). Can use octanoate (C8), decanoate (C10), dodecanoate (C12), tetradecanoate (C14) and hexadecanoate (C16), but not hexanoate (C6) in vitro (PubMed:22451903, PubMed:23625916). Long chain saturated fatty acids are the preferred substrates (PubMed:22451903, PubMed:23625916). Acts twice during the INLP pathway, catalyzing the activation of a (2E)-enoyl fatty acid as well as the corresponding (3R)-3-isocyanyl-fatty acid as acyl-adenylates (acyl-AMP), and then the acyl transfer to the dedicated acyl-carrier protein Rv0100 (By similarity). Cannot use coenzyme A to form acyl-CoA (PubMed:22451903, PubMed:23625916).</text>
</comment>
<comment type="catalytic activity">
    <reaction evidence="7 8">
        <text>a medium-chain fatty acid + holo-[ACP] + ATP = a medium-chain fatty acyl-[ACP] + AMP + diphosphate</text>
        <dbReference type="Rhea" id="RHEA:50460"/>
        <dbReference type="Rhea" id="RHEA-COMP:9685"/>
        <dbReference type="Rhea" id="RHEA-COMP:12681"/>
        <dbReference type="ChEBI" id="CHEBI:30616"/>
        <dbReference type="ChEBI" id="CHEBI:33019"/>
        <dbReference type="ChEBI" id="CHEBI:59558"/>
        <dbReference type="ChEBI" id="CHEBI:64479"/>
        <dbReference type="ChEBI" id="CHEBI:133242"/>
        <dbReference type="ChEBI" id="CHEBI:456215"/>
        <dbReference type="EC" id="6.2.1.47"/>
    </reaction>
    <physiologicalReaction direction="left-to-right" evidence="12 13">
        <dbReference type="Rhea" id="RHEA:50461"/>
    </physiologicalReaction>
</comment>
<comment type="catalytic activity">
    <reaction evidence="12 13">
        <text>a medium-chain fatty acid + ATP + H(+) = a medium-chain fatty acyl-AMP + diphosphate</text>
        <dbReference type="Rhea" id="RHEA:56920"/>
        <dbReference type="ChEBI" id="CHEBI:15378"/>
        <dbReference type="ChEBI" id="CHEBI:30616"/>
        <dbReference type="ChEBI" id="CHEBI:33019"/>
        <dbReference type="ChEBI" id="CHEBI:59558"/>
        <dbReference type="ChEBI" id="CHEBI:141140"/>
    </reaction>
    <physiologicalReaction direction="left-to-right" evidence="12 13">
        <dbReference type="Rhea" id="RHEA:56921"/>
    </physiologicalReaction>
</comment>
<comment type="catalytic activity">
    <reaction evidence="12 13">
        <text>a medium-chain fatty acyl-AMP + holo-[ACP] = a medium-chain fatty acyl-[ACP] + AMP + H(+)</text>
        <dbReference type="Rhea" id="RHEA:63636"/>
        <dbReference type="Rhea" id="RHEA-COMP:9685"/>
        <dbReference type="Rhea" id="RHEA-COMP:12681"/>
        <dbReference type="ChEBI" id="CHEBI:15378"/>
        <dbReference type="ChEBI" id="CHEBI:64479"/>
        <dbReference type="ChEBI" id="CHEBI:133242"/>
        <dbReference type="ChEBI" id="CHEBI:141140"/>
        <dbReference type="ChEBI" id="CHEBI:456215"/>
    </reaction>
    <physiologicalReaction direction="left-to-right" evidence="12 13">
        <dbReference type="Rhea" id="RHEA:63637"/>
    </physiologicalReaction>
</comment>
<comment type="catalytic activity">
    <reaction evidence="7 8">
        <text>a long-chain fatty acid + holo-[ACP] + ATP = a long-chain fatty acyl-[ACP] + AMP + diphosphate</text>
        <dbReference type="Rhea" id="RHEA:45588"/>
        <dbReference type="Rhea" id="RHEA-COMP:9685"/>
        <dbReference type="Rhea" id="RHEA-COMP:12682"/>
        <dbReference type="ChEBI" id="CHEBI:30616"/>
        <dbReference type="ChEBI" id="CHEBI:33019"/>
        <dbReference type="ChEBI" id="CHEBI:57560"/>
        <dbReference type="ChEBI" id="CHEBI:64479"/>
        <dbReference type="ChEBI" id="CHEBI:133243"/>
        <dbReference type="ChEBI" id="CHEBI:456215"/>
        <dbReference type="EC" id="6.2.1.20"/>
    </reaction>
    <physiologicalReaction direction="left-to-right" evidence="12 13">
        <dbReference type="Rhea" id="RHEA:45589"/>
    </physiologicalReaction>
</comment>
<comment type="catalytic activity">
    <reaction evidence="12 13">
        <text>a long-chain fatty acid + ATP + H(+) = a long-chain fatty acyl-AMP + diphosphate</text>
        <dbReference type="Rhea" id="RHEA:52336"/>
        <dbReference type="ChEBI" id="CHEBI:15378"/>
        <dbReference type="ChEBI" id="CHEBI:30616"/>
        <dbReference type="ChEBI" id="CHEBI:33019"/>
        <dbReference type="ChEBI" id="CHEBI:57560"/>
        <dbReference type="ChEBI" id="CHEBI:136562"/>
    </reaction>
    <physiologicalReaction direction="left-to-right" evidence="12 13">
        <dbReference type="Rhea" id="RHEA:52337"/>
    </physiologicalReaction>
</comment>
<comment type="catalytic activity">
    <reaction evidence="12 13">
        <text>a long-chain fatty acyl-AMP + holo-[ACP] = a long-chain fatty acyl-[ACP] + AMP + H(+)</text>
        <dbReference type="Rhea" id="RHEA:63632"/>
        <dbReference type="Rhea" id="RHEA-COMP:9685"/>
        <dbReference type="Rhea" id="RHEA-COMP:12682"/>
        <dbReference type="ChEBI" id="CHEBI:15378"/>
        <dbReference type="ChEBI" id="CHEBI:64479"/>
        <dbReference type="ChEBI" id="CHEBI:133243"/>
        <dbReference type="ChEBI" id="CHEBI:136562"/>
        <dbReference type="ChEBI" id="CHEBI:456215"/>
    </reaction>
    <physiologicalReaction direction="left-to-right" evidence="12 13">
        <dbReference type="Rhea" id="RHEA:63633"/>
    </physiologicalReaction>
</comment>
<comment type="catalytic activity">
    <reaction evidence="1">
        <text>a (2E)-enoyl fatty acid + holo-[ACP] + ATP = a (2E)-enoyl-[ACP] + AMP + diphosphate</text>
        <dbReference type="Rhea" id="RHEA:74911"/>
        <dbReference type="Rhea" id="RHEA-COMP:9685"/>
        <dbReference type="Rhea" id="RHEA-COMP:9925"/>
        <dbReference type="ChEBI" id="CHEBI:30616"/>
        <dbReference type="ChEBI" id="CHEBI:33019"/>
        <dbReference type="ChEBI" id="CHEBI:64479"/>
        <dbReference type="ChEBI" id="CHEBI:78784"/>
        <dbReference type="ChEBI" id="CHEBI:194103"/>
        <dbReference type="ChEBI" id="CHEBI:456215"/>
    </reaction>
    <physiologicalReaction direction="left-to-right" evidence="1">
        <dbReference type="Rhea" id="RHEA:74912"/>
    </physiologicalReaction>
</comment>
<comment type="catalytic activity">
    <reaction evidence="1">
        <text>a (2E)-enoyl fatty acid + ATP + H(+) = a (2E)-2-fatty-enoyl-AMP + diphosphate</text>
        <dbReference type="Rhea" id="RHEA:74915"/>
        <dbReference type="ChEBI" id="CHEBI:15378"/>
        <dbReference type="ChEBI" id="CHEBI:30616"/>
        <dbReference type="ChEBI" id="CHEBI:33019"/>
        <dbReference type="ChEBI" id="CHEBI:194103"/>
        <dbReference type="ChEBI" id="CHEBI:194106"/>
    </reaction>
    <physiologicalReaction direction="left-to-right" evidence="1">
        <dbReference type="Rhea" id="RHEA:74916"/>
    </physiologicalReaction>
</comment>
<comment type="catalytic activity">
    <reaction evidence="1">
        <text>a (2E)-2-fatty-enoyl-AMP + holo-[ACP] = a (2E)-enoyl-[ACP] + AMP + H(+)</text>
        <dbReference type="Rhea" id="RHEA:74919"/>
        <dbReference type="Rhea" id="RHEA-COMP:9685"/>
        <dbReference type="Rhea" id="RHEA-COMP:9925"/>
        <dbReference type="ChEBI" id="CHEBI:15378"/>
        <dbReference type="ChEBI" id="CHEBI:64479"/>
        <dbReference type="ChEBI" id="CHEBI:78784"/>
        <dbReference type="ChEBI" id="CHEBI:194106"/>
        <dbReference type="ChEBI" id="CHEBI:456215"/>
    </reaction>
    <physiologicalReaction direction="left-to-right" evidence="1">
        <dbReference type="Rhea" id="RHEA:74920"/>
    </physiologicalReaction>
</comment>
<comment type="catalytic activity">
    <reaction evidence="2">
        <text>a (3R)-3-isocyanyl-fatty acid + holo-[ACP] + ATP = a (3R)-3-isocyanyl-fatty acyl-[ACP] + AMP + diphosphate</text>
        <dbReference type="Rhea" id="RHEA:74955"/>
        <dbReference type="Rhea" id="RHEA-COMP:9685"/>
        <dbReference type="Rhea" id="RHEA-COMP:18454"/>
        <dbReference type="ChEBI" id="CHEBI:30616"/>
        <dbReference type="ChEBI" id="CHEBI:33019"/>
        <dbReference type="ChEBI" id="CHEBI:64479"/>
        <dbReference type="ChEBI" id="CHEBI:193084"/>
        <dbReference type="ChEBI" id="CHEBI:194105"/>
        <dbReference type="ChEBI" id="CHEBI:456215"/>
    </reaction>
    <physiologicalReaction direction="left-to-right" evidence="2">
        <dbReference type="Rhea" id="RHEA:74956"/>
    </physiologicalReaction>
</comment>
<comment type="catalytic activity">
    <reaction evidence="2">
        <text>a (3R)-3-isocyanyl-fatty acid + ATP + H(+) = a (3R)-3-isocyanyl-fatty acyl-AMP + diphosphate</text>
        <dbReference type="Rhea" id="RHEA:74967"/>
        <dbReference type="ChEBI" id="CHEBI:15378"/>
        <dbReference type="ChEBI" id="CHEBI:30616"/>
        <dbReference type="ChEBI" id="CHEBI:33019"/>
        <dbReference type="ChEBI" id="CHEBI:193084"/>
        <dbReference type="ChEBI" id="CHEBI:194104"/>
    </reaction>
    <physiologicalReaction direction="left-to-right" evidence="2">
        <dbReference type="Rhea" id="RHEA:74968"/>
    </physiologicalReaction>
</comment>
<comment type="catalytic activity">
    <reaction evidence="2">
        <text>a (3R)-3-isocyanyl-fatty acyl-AMP + holo-[ACP] = a (3R)-3-isocyanyl-fatty acyl-[ACP] + AMP + H(+)</text>
        <dbReference type="Rhea" id="RHEA:74975"/>
        <dbReference type="Rhea" id="RHEA-COMP:9685"/>
        <dbReference type="Rhea" id="RHEA-COMP:18454"/>
        <dbReference type="ChEBI" id="CHEBI:15378"/>
        <dbReference type="ChEBI" id="CHEBI:64479"/>
        <dbReference type="ChEBI" id="CHEBI:194104"/>
        <dbReference type="ChEBI" id="CHEBI:194105"/>
        <dbReference type="ChEBI" id="CHEBI:456215"/>
    </reaction>
    <physiologicalReaction direction="left-to-right" evidence="2">
        <dbReference type="Rhea" id="RHEA:74976"/>
    </physiologicalReaction>
</comment>
<comment type="catalytic activity">
    <reaction evidence="7">
        <text>octanoate + holo-[ACP] + ATP = octanoyl-[ACP] + AMP + diphosphate</text>
        <dbReference type="Rhea" id="RHEA:28022"/>
        <dbReference type="Rhea" id="RHEA-COMP:9636"/>
        <dbReference type="Rhea" id="RHEA-COMP:9685"/>
        <dbReference type="ChEBI" id="CHEBI:25646"/>
        <dbReference type="ChEBI" id="CHEBI:30616"/>
        <dbReference type="ChEBI" id="CHEBI:33019"/>
        <dbReference type="ChEBI" id="CHEBI:64479"/>
        <dbReference type="ChEBI" id="CHEBI:78463"/>
        <dbReference type="ChEBI" id="CHEBI:456215"/>
    </reaction>
    <physiologicalReaction direction="left-to-right" evidence="12">
        <dbReference type="Rhea" id="RHEA:28023"/>
    </physiologicalReaction>
</comment>
<comment type="catalytic activity">
    <reaction evidence="12">
        <text>octanoate + ATP + H(+) = octanoyl-AMP + diphosphate</text>
        <dbReference type="Rhea" id="RHEA:64996"/>
        <dbReference type="ChEBI" id="CHEBI:15378"/>
        <dbReference type="ChEBI" id="CHEBI:25646"/>
        <dbReference type="ChEBI" id="CHEBI:30616"/>
        <dbReference type="ChEBI" id="CHEBI:33019"/>
        <dbReference type="ChEBI" id="CHEBI:156260"/>
    </reaction>
    <physiologicalReaction direction="left-to-right" evidence="12">
        <dbReference type="Rhea" id="RHEA:64997"/>
    </physiologicalReaction>
</comment>
<comment type="catalytic activity">
    <reaction evidence="12">
        <text>octanoyl-AMP + holo-[ACP] = octanoyl-[ACP] + AMP + H(+)</text>
        <dbReference type="Rhea" id="RHEA:65000"/>
        <dbReference type="Rhea" id="RHEA-COMP:9636"/>
        <dbReference type="Rhea" id="RHEA-COMP:9685"/>
        <dbReference type="ChEBI" id="CHEBI:15378"/>
        <dbReference type="ChEBI" id="CHEBI:64479"/>
        <dbReference type="ChEBI" id="CHEBI:78463"/>
        <dbReference type="ChEBI" id="CHEBI:156260"/>
        <dbReference type="ChEBI" id="CHEBI:456215"/>
    </reaction>
    <physiologicalReaction direction="left-to-right" evidence="12">
        <dbReference type="Rhea" id="RHEA:65001"/>
    </physiologicalReaction>
</comment>
<comment type="catalytic activity">
    <reaction evidence="7">
        <text>decanoate + holo-[ACP] + ATP = decanoyl-[ACP] + AMP + diphosphate</text>
        <dbReference type="Rhea" id="RHEA:65004"/>
        <dbReference type="Rhea" id="RHEA-COMP:9640"/>
        <dbReference type="Rhea" id="RHEA-COMP:9685"/>
        <dbReference type="ChEBI" id="CHEBI:27689"/>
        <dbReference type="ChEBI" id="CHEBI:30616"/>
        <dbReference type="ChEBI" id="CHEBI:33019"/>
        <dbReference type="ChEBI" id="CHEBI:64479"/>
        <dbReference type="ChEBI" id="CHEBI:78468"/>
        <dbReference type="ChEBI" id="CHEBI:456215"/>
    </reaction>
    <physiologicalReaction direction="left-to-right" evidence="12">
        <dbReference type="Rhea" id="RHEA:65005"/>
    </physiologicalReaction>
</comment>
<comment type="catalytic activity">
    <reaction evidence="12">
        <text>decanoate + ATP + H(+) = decanoyl-AMP + diphosphate</text>
        <dbReference type="Rhea" id="RHEA:65008"/>
        <dbReference type="ChEBI" id="CHEBI:15378"/>
        <dbReference type="ChEBI" id="CHEBI:27689"/>
        <dbReference type="ChEBI" id="CHEBI:30616"/>
        <dbReference type="ChEBI" id="CHEBI:33019"/>
        <dbReference type="ChEBI" id="CHEBI:156261"/>
    </reaction>
    <physiologicalReaction direction="left-to-right" evidence="12">
        <dbReference type="Rhea" id="RHEA:65009"/>
    </physiologicalReaction>
</comment>
<comment type="catalytic activity">
    <reaction evidence="12">
        <text>decanoyl-AMP + holo-[ACP] = decanoyl-[ACP] + AMP + H(+)</text>
        <dbReference type="Rhea" id="RHEA:65012"/>
        <dbReference type="Rhea" id="RHEA-COMP:9640"/>
        <dbReference type="Rhea" id="RHEA-COMP:9685"/>
        <dbReference type="ChEBI" id="CHEBI:15378"/>
        <dbReference type="ChEBI" id="CHEBI:64479"/>
        <dbReference type="ChEBI" id="CHEBI:78468"/>
        <dbReference type="ChEBI" id="CHEBI:156261"/>
        <dbReference type="ChEBI" id="CHEBI:456215"/>
    </reaction>
    <physiologicalReaction direction="left-to-right" evidence="12">
        <dbReference type="Rhea" id="RHEA:65013"/>
    </physiologicalReaction>
</comment>
<comment type="catalytic activity">
    <reaction evidence="7 8">
        <text>dodecanoate + holo-[ACP] + ATP = dodecanoyl-[ACP] + AMP + diphosphate</text>
        <dbReference type="Rhea" id="RHEA:63620"/>
        <dbReference type="Rhea" id="RHEA-COMP:9644"/>
        <dbReference type="Rhea" id="RHEA-COMP:9685"/>
        <dbReference type="ChEBI" id="CHEBI:18262"/>
        <dbReference type="ChEBI" id="CHEBI:30616"/>
        <dbReference type="ChEBI" id="CHEBI:33019"/>
        <dbReference type="ChEBI" id="CHEBI:64479"/>
        <dbReference type="ChEBI" id="CHEBI:65264"/>
        <dbReference type="ChEBI" id="CHEBI:456215"/>
    </reaction>
    <physiologicalReaction direction="left-to-right" evidence="12 13">
        <dbReference type="Rhea" id="RHEA:63621"/>
    </physiologicalReaction>
</comment>
<comment type="catalytic activity">
    <reaction evidence="12 13">
        <text>dodecanoate + ATP + H(+) = dodecanoyl-AMP + diphosphate</text>
        <dbReference type="Rhea" id="RHEA:43712"/>
        <dbReference type="ChEBI" id="CHEBI:15378"/>
        <dbReference type="ChEBI" id="CHEBI:18262"/>
        <dbReference type="ChEBI" id="CHEBI:30616"/>
        <dbReference type="ChEBI" id="CHEBI:33019"/>
        <dbReference type="ChEBI" id="CHEBI:83623"/>
    </reaction>
    <physiologicalReaction direction="left-to-right" evidence="12 13">
        <dbReference type="Rhea" id="RHEA:43713"/>
    </physiologicalReaction>
</comment>
<comment type="catalytic activity">
    <reaction evidence="12 13">
        <text>dodecanoyl-AMP + holo-[ACP] = dodecanoyl-[ACP] + AMP + H(+)</text>
        <dbReference type="Rhea" id="RHEA:46504"/>
        <dbReference type="Rhea" id="RHEA-COMP:9644"/>
        <dbReference type="Rhea" id="RHEA-COMP:9685"/>
        <dbReference type="ChEBI" id="CHEBI:15378"/>
        <dbReference type="ChEBI" id="CHEBI:64479"/>
        <dbReference type="ChEBI" id="CHEBI:65264"/>
        <dbReference type="ChEBI" id="CHEBI:83623"/>
        <dbReference type="ChEBI" id="CHEBI:456215"/>
    </reaction>
    <physiologicalReaction direction="left-to-right" evidence="12 13">
        <dbReference type="Rhea" id="RHEA:46505"/>
    </physiologicalReaction>
</comment>
<comment type="catalytic activity">
    <reaction evidence="8">
        <text>tetradecanoate + holo-[ACP] + ATP = tetradecanoyl-[ACP] + AMP + diphosphate</text>
        <dbReference type="Rhea" id="RHEA:64888"/>
        <dbReference type="Rhea" id="RHEA-COMP:9648"/>
        <dbReference type="Rhea" id="RHEA-COMP:9685"/>
        <dbReference type="ChEBI" id="CHEBI:30616"/>
        <dbReference type="ChEBI" id="CHEBI:30807"/>
        <dbReference type="ChEBI" id="CHEBI:33019"/>
        <dbReference type="ChEBI" id="CHEBI:64479"/>
        <dbReference type="ChEBI" id="CHEBI:78477"/>
        <dbReference type="ChEBI" id="CHEBI:456215"/>
    </reaction>
    <physiologicalReaction direction="left-to-right" evidence="13">
        <dbReference type="Rhea" id="RHEA:64889"/>
    </physiologicalReaction>
</comment>
<comment type="catalytic activity">
    <reaction evidence="13">
        <text>tetradecanoate + ATP + H(+) = tetradecanoyl-AMP + diphosphate</text>
        <dbReference type="Rhea" id="RHEA:43704"/>
        <dbReference type="ChEBI" id="CHEBI:15378"/>
        <dbReference type="ChEBI" id="CHEBI:30616"/>
        <dbReference type="ChEBI" id="CHEBI:30807"/>
        <dbReference type="ChEBI" id="CHEBI:33019"/>
        <dbReference type="ChEBI" id="CHEBI:83626"/>
    </reaction>
    <physiologicalReaction direction="left-to-right" evidence="13">
        <dbReference type="Rhea" id="RHEA:43705"/>
    </physiologicalReaction>
</comment>
<comment type="catalytic activity">
    <reaction evidence="13">
        <text>tetradecanoyl-AMP + holo-[ACP] = tetradecanoyl-[ACP] + AMP + H(+)</text>
        <dbReference type="Rhea" id="RHEA:64892"/>
        <dbReference type="Rhea" id="RHEA-COMP:9648"/>
        <dbReference type="Rhea" id="RHEA-COMP:9685"/>
        <dbReference type="ChEBI" id="CHEBI:15378"/>
        <dbReference type="ChEBI" id="CHEBI:64479"/>
        <dbReference type="ChEBI" id="CHEBI:78477"/>
        <dbReference type="ChEBI" id="CHEBI:83626"/>
        <dbReference type="ChEBI" id="CHEBI:456215"/>
    </reaction>
    <physiologicalReaction direction="left-to-right" evidence="13">
        <dbReference type="Rhea" id="RHEA:64893"/>
    </physiologicalReaction>
</comment>
<comment type="catalytic activity">
    <reaction evidence="7 8">
        <text>hexadecanoate + holo-[ACP] + ATP = hexadecanoyl-[ACP] + AMP + diphosphate</text>
        <dbReference type="Rhea" id="RHEA:63628"/>
        <dbReference type="Rhea" id="RHEA-COMP:9652"/>
        <dbReference type="Rhea" id="RHEA-COMP:9685"/>
        <dbReference type="ChEBI" id="CHEBI:7896"/>
        <dbReference type="ChEBI" id="CHEBI:30616"/>
        <dbReference type="ChEBI" id="CHEBI:33019"/>
        <dbReference type="ChEBI" id="CHEBI:64479"/>
        <dbReference type="ChEBI" id="CHEBI:78483"/>
        <dbReference type="ChEBI" id="CHEBI:456215"/>
    </reaction>
    <physiologicalReaction direction="left-to-right" evidence="12 13">
        <dbReference type="Rhea" id="RHEA:63629"/>
    </physiologicalReaction>
</comment>
<comment type="catalytic activity">
    <reaction evidence="12 13">
        <text>hexadecanoate + ATP + H(+) = hexadecanoyl-AMP + diphosphate</text>
        <dbReference type="Rhea" id="RHEA:43708"/>
        <dbReference type="ChEBI" id="CHEBI:7896"/>
        <dbReference type="ChEBI" id="CHEBI:15378"/>
        <dbReference type="ChEBI" id="CHEBI:30616"/>
        <dbReference type="ChEBI" id="CHEBI:33019"/>
        <dbReference type="ChEBI" id="CHEBI:83627"/>
    </reaction>
    <physiologicalReaction direction="left-to-right" evidence="12 13">
        <dbReference type="Rhea" id="RHEA:43709"/>
    </physiologicalReaction>
</comment>
<comment type="catalytic activity">
    <reaction evidence="12 13">
        <text>hexadecanoyl-AMP + holo-[ACP] = hexadecanoyl-[ACP] + AMP + H(+)</text>
        <dbReference type="Rhea" id="RHEA:63624"/>
        <dbReference type="Rhea" id="RHEA-COMP:9652"/>
        <dbReference type="Rhea" id="RHEA-COMP:9685"/>
        <dbReference type="ChEBI" id="CHEBI:15378"/>
        <dbReference type="ChEBI" id="CHEBI:64479"/>
        <dbReference type="ChEBI" id="CHEBI:78483"/>
        <dbReference type="ChEBI" id="CHEBI:83627"/>
        <dbReference type="ChEBI" id="CHEBI:456215"/>
    </reaction>
    <physiologicalReaction direction="left-to-right" evidence="12 13">
        <dbReference type="Rhea" id="RHEA:63625"/>
    </physiologicalReaction>
</comment>
<comment type="cofactor">
    <cofactor evidence="3">
        <name>Mg(2+)</name>
        <dbReference type="ChEBI" id="CHEBI:18420"/>
    </cofactor>
</comment>
<comment type="pathway">
    <text evidence="11">Lipid metabolism; fatty acid metabolism.</text>
</comment>
<comment type="subunit">
    <text evidence="8">Homodimer.</text>
</comment>
<comment type="subcellular location">
    <subcellularLocation>
        <location evidence="11">Cytoplasm</location>
    </subcellularLocation>
</comment>
<comment type="induction">
    <text evidence="5">Repressed by CRP.</text>
</comment>
<comment type="domain">
    <text evidence="8">Retains a single open conformational state for both the apo- and ligand-bound forms.</text>
</comment>
<comment type="disruption phenotype">
    <text evidence="4">Cells lacking this gene are shown to be highly attenuated in a mouse tuberculosis model.</text>
</comment>
<comment type="similarity">
    <text evidence="11">Belongs to the ATP-dependent AMP-binding enzyme family.</text>
</comment>
<comment type="caution">
    <text evidence="6 7 8">Was originally thought to be a fatty acyl-CoA ligase (FACL) (PubMed:19182784). However, although FadD10 has a primary sequence similar to FACLs, it is indeed a fatty acyl-AMP ligase (FAAL) that is only able to acylate an ACP (Rv0100) rather than coenzyme A (PubMed:22451903, PubMed:23625916).</text>
</comment>
<proteinExistence type="evidence at protein level"/>
<keyword id="KW-0002">3D-structure</keyword>
<keyword id="KW-0067">ATP-binding</keyword>
<keyword id="KW-0963">Cytoplasm</keyword>
<keyword id="KW-0276">Fatty acid metabolism</keyword>
<keyword id="KW-0436">Ligase</keyword>
<keyword id="KW-0443">Lipid metabolism</keyword>
<keyword id="KW-0460">Magnesium</keyword>
<keyword id="KW-0479">Metal-binding</keyword>
<keyword id="KW-0547">Nucleotide-binding</keyword>
<keyword id="KW-1185">Reference proteome</keyword>
<reference key="1">
    <citation type="journal article" date="1998" name="Nature">
        <title>Deciphering the biology of Mycobacterium tuberculosis from the complete genome sequence.</title>
        <authorList>
            <person name="Cole S.T."/>
            <person name="Brosch R."/>
            <person name="Parkhill J."/>
            <person name="Garnier T."/>
            <person name="Churcher C.M."/>
            <person name="Harris D.E."/>
            <person name="Gordon S.V."/>
            <person name="Eiglmeier K."/>
            <person name="Gas S."/>
            <person name="Barry C.E. III"/>
            <person name="Tekaia F."/>
            <person name="Badcock K."/>
            <person name="Basham D."/>
            <person name="Brown D."/>
            <person name="Chillingworth T."/>
            <person name="Connor R."/>
            <person name="Davies R.M."/>
            <person name="Devlin K."/>
            <person name="Feltwell T."/>
            <person name="Gentles S."/>
            <person name="Hamlin N."/>
            <person name="Holroyd S."/>
            <person name="Hornsby T."/>
            <person name="Jagels K."/>
            <person name="Krogh A."/>
            <person name="McLean J."/>
            <person name="Moule S."/>
            <person name="Murphy L.D."/>
            <person name="Oliver S."/>
            <person name="Osborne J."/>
            <person name="Quail M.A."/>
            <person name="Rajandream M.A."/>
            <person name="Rogers J."/>
            <person name="Rutter S."/>
            <person name="Seeger K."/>
            <person name="Skelton S."/>
            <person name="Squares S."/>
            <person name="Squares R."/>
            <person name="Sulston J.E."/>
            <person name="Taylor K."/>
            <person name="Whitehead S."/>
            <person name="Barrell B.G."/>
        </authorList>
    </citation>
    <scope>NUCLEOTIDE SEQUENCE [LARGE SCALE GENOMIC DNA]</scope>
    <source>
        <strain>ATCC 25618 / H37Rv</strain>
    </source>
</reference>
<reference key="2">
    <citation type="journal article" date="2003" name="Proc. Natl. Acad. Sci. U.S.A.">
        <title>Genetic requirements for mycobacterial survival during infection.</title>
        <authorList>
            <person name="Sassetti C.M."/>
            <person name="Rubin E.J."/>
        </authorList>
    </citation>
    <scope>DISRUPTION PHENOTYPE</scope>
    <source>
        <strain>ATCC 25618 / H37Rv</strain>
    </source>
</reference>
<reference key="3">
    <citation type="journal article" date="2005" name="Mol. Microbiol.">
        <title>A member of the cAMP receptor protein family of transcription regulators in Mycobacterium tuberculosis is required for virulence in mice and controls transcription of the rpfA gene coding for a resuscitation promoting factor.</title>
        <authorList>
            <person name="Rickman L."/>
            <person name="Scott C."/>
            <person name="Hunt D.M."/>
            <person name="Hutchinson T."/>
            <person name="Menendez M.C."/>
            <person name="Whalan R."/>
            <person name="Hinds J."/>
            <person name="Colston M.J."/>
            <person name="Green J."/>
            <person name="Buxton R.S."/>
        </authorList>
    </citation>
    <scope>INDUCTION</scope>
    <source>
        <strain>ATCC 25618 / H37Rv</strain>
    </source>
</reference>
<reference key="4">
    <citation type="journal article" date="2009" name="Nat. Chem. Biol.">
        <title>Mechanistic and functional insights into fatty acid activation in Mycobacterium tuberculosis.</title>
        <authorList>
            <person name="Arora P."/>
            <person name="Goyal A."/>
            <person name="Natarajan V.T."/>
            <person name="Rajakumara E."/>
            <person name="Verma P."/>
            <person name="Gupta R."/>
            <person name="Yousuf M."/>
            <person name="Trivedi O.A."/>
            <person name="Mohanty D."/>
            <person name="Tyagi A."/>
            <person name="Sankaranarayanan R."/>
            <person name="Gokhale R.S."/>
        </authorList>
    </citation>
    <scope>PRELIMINARY FUNCTION AS FATTY-ACID--COA LIGASE</scope>
</reference>
<reference key="5">
    <citation type="journal article" date="2011" name="Mol. Cell. Proteomics">
        <title>Proteogenomic analysis of Mycobacterium tuberculosis by high resolution mass spectrometry.</title>
        <authorList>
            <person name="Kelkar D.S."/>
            <person name="Kumar D."/>
            <person name="Kumar P."/>
            <person name="Balakrishnan L."/>
            <person name="Muthusamy B."/>
            <person name="Yadav A.K."/>
            <person name="Shrivastava P."/>
            <person name="Marimuthu A."/>
            <person name="Anand S."/>
            <person name="Sundaram H."/>
            <person name="Kingsbury R."/>
            <person name="Harsha H.C."/>
            <person name="Nair B."/>
            <person name="Prasad T.S."/>
            <person name="Chauhan D.S."/>
            <person name="Katoch K."/>
            <person name="Katoch V.M."/>
            <person name="Kumar P."/>
            <person name="Chaerkady R."/>
            <person name="Ramachandran S."/>
            <person name="Dash D."/>
            <person name="Pandey A."/>
        </authorList>
    </citation>
    <scope>IDENTIFICATION BY MASS SPECTROMETRY [LARGE SCALE ANALYSIS]</scope>
    <source>
        <strain>ATCC 25618 / H37Rv</strain>
    </source>
</reference>
<reference key="6">
    <citation type="journal article" date="2012" name="Proc. Natl. Acad. Sci. U.S.A.">
        <title>Nonprocessive [2 + 2]e- off-loading reductase domains from mycobacterial nonribosomal peptide synthetases.</title>
        <authorList>
            <person name="Chhabra A."/>
            <person name="Haque A.S."/>
            <person name="Pal R.K."/>
            <person name="Goyal A."/>
            <person name="Rai R."/>
            <person name="Joshi S."/>
            <person name="Panjikar S."/>
            <person name="Pasha S."/>
            <person name="Sankaranarayanan R."/>
            <person name="Gokhale R.S."/>
        </authorList>
    </citation>
    <scope>FUNCTION</scope>
    <scope>CATALYTIC ACTIVITY</scope>
</reference>
<reference key="7">
    <citation type="journal article" date="2017" name="Proc. Natl. Acad. Sci. U.S.A.">
        <title>Biosynthesis of isonitrile lipopeptides by conserved nonribosomal peptide synthetase gene clusters in Actinobacteria.</title>
        <authorList>
            <person name="Harris N.C."/>
            <person name="Sato M."/>
            <person name="Herman N.A."/>
            <person name="Twigg F."/>
            <person name="Cai W."/>
            <person name="Liu J."/>
            <person name="Zhu X."/>
            <person name="Downey J."/>
            <person name="Khalaf R."/>
            <person name="Martin J."/>
            <person name="Koshino H."/>
            <person name="Zhang W."/>
        </authorList>
    </citation>
    <scope>FUNCTION</scope>
    <source>
        <strain>ATCC 25618 / H37Rv</strain>
    </source>
</reference>
<reference evidence="14 15" key="8">
    <citation type="journal article" date="2013" name="J. Biol. Chem.">
        <title>Structures of Mycobacterium tuberculosis FadD10 protein reveal a new type of adenylate-forming enzyme.</title>
        <authorList>
            <person name="Liu Z."/>
            <person name="Ioerger T.R."/>
            <person name="Wang F."/>
            <person name="Sacchettini J.C."/>
        </authorList>
    </citation>
    <scope>X-RAY CRYSTALLOGRAPHY (2.20 ANGSTROMS) OF APOENZYME AND IN COMPLEX WITH DODECANOYL-AMP</scope>
    <scope>FUNCTION</scope>
    <scope>CATALYTIC ACTIVITY</scope>
    <scope>SUBUNIT</scope>
    <scope>DOMAIN</scope>
</reference>
<feature type="chain" id="PRO_0000420403" description="Medium/long-chain-fatty-acid--[acyl-carrier-protein] ligase FadD10">
    <location>
        <begin position="1"/>
        <end position="540"/>
    </location>
</feature>
<feature type="binding site" evidence="3">
    <location>
        <position position="177"/>
    </location>
    <ligand>
        <name>Mg(2+)</name>
        <dbReference type="ChEBI" id="CHEBI:18420"/>
    </ligand>
</feature>
<feature type="binding site" evidence="3">
    <location>
        <position position="226"/>
    </location>
    <ligand>
        <name>ATP</name>
        <dbReference type="ChEBI" id="CHEBI:30616"/>
    </ligand>
</feature>
<feature type="binding site" evidence="8 14">
    <location>
        <position position="315"/>
    </location>
    <ligand>
        <name>dodecanoyl-AMP</name>
        <dbReference type="ChEBI" id="CHEBI:83623"/>
    </ligand>
</feature>
<feature type="binding site" evidence="3">
    <location>
        <position position="316"/>
    </location>
    <ligand>
        <name>ATP</name>
        <dbReference type="ChEBI" id="CHEBI:30616"/>
    </ligand>
</feature>
<feature type="binding site" evidence="8 14">
    <location>
        <position position="316"/>
    </location>
    <ligand>
        <name>dodecanoyl-AMP</name>
        <dbReference type="ChEBI" id="CHEBI:83623"/>
    </ligand>
</feature>
<feature type="binding site" evidence="3">
    <location>
        <position position="320"/>
    </location>
    <ligand>
        <name>ATP</name>
        <dbReference type="ChEBI" id="CHEBI:30616"/>
    </ligand>
</feature>
<feature type="binding site" evidence="3">
    <location>
        <position position="321"/>
    </location>
    <ligand>
        <name>Mg(2+)</name>
        <dbReference type="ChEBI" id="CHEBI:18420"/>
    </ligand>
</feature>
<feature type="binding site" evidence="3">
    <location>
        <position position="408"/>
    </location>
    <ligand>
        <name>ATP</name>
        <dbReference type="ChEBI" id="CHEBI:30616"/>
    </ligand>
</feature>
<feature type="binding site" evidence="8 14">
    <location>
        <position position="408"/>
    </location>
    <ligand>
        <name>dodecanoyl-AMP</name>
        <dbReference type="ChEBI" id="CHEBI:83623"/>
    </ligand>
</feature>
<protein>
    <recommendedName>
        <fullName evidence="11">Medium/long-chain-fatty-acid--[acyl-carrier-protein] ligase FadD10</fullName>
        <ecNumber evidence="7 8">6.2.1.20</ecNumber>
        <ecNumber evidence="7 8">6.2.1.47</ecNumber>
    </recommendedName>
    <alternativeName>
        <fullName evidence="10">FAAL10</fullName>
    </alternativeName>
</protein>
<accession>P9WQ55</accession>
<accession>F2GLP5</accession>
<accession>L0T2G2</accession>
<accession>Q10878</accession>
<accession>Q7DAH0</accession>
<evidence type="ECO:0000250" key="1">
    <source>
        <dbReference type="UniProtKB" id="B2HKM1"/>
    </source>
</evidence>
<evidence type="ECO:0000250" key="2">
    <source>
        <dbReference type="UniProtKB" id="P0DX14"/>
    </source>
</evidence>
<evidence type="ECO:0000250" key="3">
    <source>
        <dbReference type="UniProtKB" id="Q5SKN9"/>
    </source>
</evidence>
<evidence type="ECO:0000269" key="4">
    <source>
    </source>
</evidence>
<evidence type="ECO:0000269" key="5">
    <source>
    </source>
</evidence>
<evidence type="ECO:0000269" key="6">
    <source>
    </source>
</evidence>
<evidence type="ECO:0000269" key="7">
    <source>
    </source>
</evidence>
<evidence type="ECO:0000269" key="8">
    <source>
    </source>
</evidence>
<evidence type="ECO:0000269" key="9">
    <source>
    </source>
</evidence>
<evidence type="ECO:0000303" key="10">
    <source>
    </source>
</evidence>
<evidence type="ECO:0000305" key="11"/>
<evidence type="ECO:0000305" key="12">
    <source>
    </source>
</evidence>
<evidence type="ECO:0000305" key="13">
    <source>
    </source>
</evidence>
<evidence type="ECO:0007744" key="14">
    <source>
        <dbReference type="PDB" id="4IR7"/>
    </source>
</evidence>
<evidence type="ECO:0007744" key="15">
    <source>
        <dbReference type="PDB" id="4ISB"/>
    </source>
</evidence>
<gene>
    <name type="primary">fadD10</name>
    <name type="ordered locus">Rv0099</name>
</gene>
<sequence length="540" mass="56590">MGGKKFQAMPQLPSTVLDRVFEQARQQPEAIALRRCDGTSALRYRELVAEVGGLAADLRAQSVSRGSRVLVISDNGPETYLSVLACAKLGAIAVMADGNLPIAAIERFCQITDPAAALVAPGSKMASSAVPEALHSIPVIAVDIAAVTRESEHSLDAASLAGNADQGSEDPLAMIFTSGTTGEPKAVLLANRTFFAVPDILQKEGLNWVTWVVGETTYSPLPATHIGGLWWILTCLMHGGLCVTGGENTTSLLEILTTNAVATTCLVPTLLSKLVSELKSANATVPSLRLVGYGGSRAIAADVRFIEATGVRTAQVYGLSETGCTALCLPTDDGSIVKIEAGAVGRPYPGVDVYLAATDGIGPTAPGAGPSASFGTLWIKSPANMLGYWNNPERTAEVLIDGWVNTGDLLERREDGFFYIKGRSSEMIICGGVNIAPDEVDRIAEGVSGVREAACYEIPDEEFGALVGLAVVASAELDESAARALKHTIAARFRRESEPMARPSTIVIVTDIPRTQSGKVMRASLAAAATADKARVVVRG</sequence>